<reference key="1">
    <citation type="journal article" date="1987" name="Nucleic Acids Res.">
        <title>Complete nucleotide sequence of the Escherichia coli gene encoding malate dehydrogenase.</title>
        <authorList>
            <person name="McAlister-Henn L."/>
            <person name="Blaber M."/>
            <person name="Bradshaw R.A."/>
            <person name="Nisco S.J."/>
        </authorList>
    </citation>
    <scope>NUCLEOTIDE SEQUENCE [GENOMIC DNA]</scope>
</reference>
<reference key="2">
    <citation type="journal article" date="1987" name="Arch. Microbiol.">
        <title>Cloning and sequence of the mdh structural gene of Escherichia coli coding for malate dehydrogenase.</title>
        <authorList>
            <person name="Vogel R.F."/>
            <person name="Entian K.-D."/>
            <person name="Mecke D."/>
        </authorList>
    </citation>
    <scope>NUCLEOTIDE SEQUENCE [GENOMIC DNA]</scope>
</reference>
<reference key="3">
    <citation type="journal article" date="1997" name="Science">
        <title>The complete genome sequence of Escherichia coli K-12.</title>
        <authorList>
            <person name="Blattner F.R."/>
            <person name="Plunkett G. III"/>
            <person name="Bloch C.A."/>
            <person name="Perna N.T."/>
            <person name="Burland V."/>
            <person name="Riley M."/>
            <person name="Collado-Vides J."/>
            <person name="Glasner J.D."/>
            <person name="Rode C.K."/>
            <person name="Mayhew G.F."/>
            <person name="Gregor J."/>
            <person name="Davis N.W."/>
            <person name="Kirkpatrick H.A."/>
            <person name="Goeden M.A."/>
            <person name="Rose D.J."/>
            <person name="Mau B."/>
            <person name="Shao Y."/>
        </authorList>
    </citation>
    <scope>NUCLEOTIDE SEQUENCE [LARGE SCALE GENOMIC DNA]</scope>
    <source>
        <strain>K12 / MG1655 / ATCC 47076</strain>
    </source>
</reference>
<reference key="4">
    <citation type="journal article" date="2006" name="Mol. Syst. Biol.">
        <title>Highly accurate genome sequences of Escherichia coli K-12 strains MG1655 and W3110.</title>
        <authorList>
            <person name="Hayashi K."/>
            <person name="Morooka N."/>
            <person name="Yamamoto Y."/>
            <person name="Fujita K."/>
            <person name="Isono K."/>
            <person name="Choi S."/>
            <person name="Ohtsubo E."/>
            <person name="Baba T."/>
            <person name="Wanner B.L."/>
            <person name="Mori H."/>
            <person name="Horiuchi T."/>
        </authorList>
    </citation>
    <scope>NUCLEOTIDE SEQUENCE [LARGE SCALE GENOMIC DNA]</scope>
    <source>
        <strain>K12 / W3110 / ATCC 27325 / DSM 5911</strain>
    </source>
</reference>
<reference key="5">
    <citation type="journal article" date="1985" name="J. Bacteriol.">
        <title>Isolation and expression of the Escherichia coli gene encoding malate dehydrogenase.</title>
        <authorList>
            <person name="Sutherland P."/>
            <person name="McAlister-Henn L."/>
        </authorList>
    </citation>
    <scope>NUCLEOTIDE SEQUENCE [GENOMIC DNA] OF 1-40</scope>
    <scope>FUNCTION</scope>
    <scope>CATALYTIC ACTIVITY</scope>
</reference>
<reference key="6">
    <citation type="journal article" date="1981" name="Biosci. Rep.">
        <title>Malate dehydrogenase: isolation from E. coli and comparison with the eukaryotic mitochondrial and cytoplasmic forms.</title>
        <authorList>
            <person name="Fernley R.T."/>
            <person name="Lentz S.R."/>
            <person name="Bradshaw R.A."/>
        </authorList>
    </citation>
    <scope>PROTEIN SEQUENCE OF 1-36</scope>
    <scope>FUNCTION</scope>
    <scope>CATALYTIC ACTIVITY</scope>
    <scope>SUBUNIT</scope>
</reference>
<reference key="7">
    <citation type="journal article" date="1997" name="Electrophoresis">
        <title>Comparing the predicted and observed properties of proteins encoded in the genome of Escherichia coli K-12.</title>
        <authorList>
            <person name="Link A.J."/>
            <person name="Robison K."/>
            <person name="Church G.M."/>
        </authorList>
    </citation>
    <scope>PROTEIN SEQUENCE OF 1-26</scope>
    <source>
        <strain>K12 / EMG2</strain>
    </source>
</reference>
<reference key="8">
    <citation type="journal article" date="1997" name="J. Bacteriol.">
        <title>Structural studies of malate dehydrogenases (MDHs): MDHs in Brevundimonas species are the first reported MDHs in Proteobacteria which resemble lactate dehydrogenases in primary structure.</title>
        <authorList>
            <person name="Charnock C."/>
        </authorList>
    </citation>
    <scope>PROTEIN SEQUENCE OF 1-26</scope>
</reference>
<reference key="9">
    <citation type="journal article" date="1993" name="Proc. Natl. Acad. Sci. U.S.A.">
        <title>Identifying proteins from two-dimensional gels by molecular mass searching of peptide fragments in protein sequence databases.</title>
        <authorList>
            <person name="Henzel W.J."/>
            <person name="Billeci T.M."/>
            <person name="Stults J.T."/>
            <person name="Wong S.C."/>
            <person name="Grimley C."/>
            <person name="Watanabe C."/>
        </authorList>
    </citation>
    <scope>PROTEIN SEQUENCE OF 1-16</scope>
</reference>
<reference key="10">
    <citation type="journal article" date="1996" name="EMBO J.">
        <title>Bacterial defense against aging: role of the Escherichia coli ArcA regulator in gene expression, readjusted energy flux and survival during stasis.</title>
        <authorList>
            <person name="Nystroem T."/>
            <person name="Larsson C."/>
            <person name="Gustafsson L."/>
        </authorList>
    </citation>
    <scope>PROTEIN SEQUENCE OF 1-13</scope>
</reference>
<reference key="11">
    <citation type="submission" date="1996-02" db="UniProtKB">
        <authorList>
            <person name="Frutiger S."/>
            <person name="Hughes G.J."/>
            <person name="Pasquali C."/>
            <person name="Hochstrasser D.F."/>
        </authorList>
    </citation>
    <scope>PROTEIN SEQUENCE OF 1-11</scope>
    <source>
        <strain>K12 / W3110 / ATCC 27325 / DSM 5911</strain>
    </source>
</reference>
<reference key="12">
    <citation type="journal article" date="1998" name="J. Mol. Biol.">
        <title>Protein identification with N and C-terminal sequence tags in proteome projects.</title>
        <authorList>
            <person name="Wilkins M.R."/>
            <person name="Gasteiger E."/>
            <person name="Tonella L."/>
            <person name="Ou K."/>
            <person name="Tyler M."/>
            <person name="Sanchez J.-C."/>
            <person name="Gooley A.A."/>
            <person name="Walsh B.J."/>
            <person name="Bairoch A."/>
            <person name="Appel R.D."/>
            <person name="Williams K.L."/>
            <person name="Hochstrasser D.F."/>
        </authorList>
    </citation>
    <scope>PROTEIN SEQUENCE OF 1-4</scope>
    <source>
        <strain>K12 / W3110 / ATCC 27325 / DSM 5911</strain>
    </source>
</reference>
<reference key="13">
    <citation type="journal article" date="1994" name="Proc. Natl. Acad. Sci. U.S.A.">
        <title>Molecular genetic basis of allelic polymorphism in malate dehydrogenase (mdh) in natural populations of Escherichia coli and Salmonella enterica.</title>
        <authorList>
            <person name="Boyd E.F."/>
            <person name="Nelson K."/>
            <person name="Wang F.-S."/>
            <person name="Whittam T.S."/>
            <person name="Selander R.K."/>
        </authorList>
    </citation>
    <scope>NUCLEOTIDE SEQUENCE [GENOMIC DNA] OF 12-299</scope>
    <source>
        <strain>Various strains</strain>
    </source>
</reference>
<reference key="14">
    <citation type="journal article" date="1997" name="Infect. Immun.">
        <title>Evolutionary relationships among pathogenic and nonpathogenic Escherichia coli strains inferred from multilocus enzyme electrophoresis and mdh sequence studies.</title>
        <authorList>
            <person name="Pupo G.M."/>
            <person name="Karaolis D.K."/>
            <person name="Lan R."/>
            <person name="Reeves P.R."/>
        </authorList>
    </citation>
    <scope>NUCLEOTIDE SEQUENCE [GENOMIC DNA] OF 12-299</scope>
    <source>
        <strain>Various strains</strain>
    </source>
</reference>
<reference key="15">
    <citation type="journal article" date="2000" name="Environ. Microbiol.">
        <title>Population genetics of Escherichia coli in a natural population of native Australian rats.</title>
        <authorList>
            <person name="Pupo G.M."/>
            <person name="Lan R."/>
            <person name="Reeves P.R."/>
            <person name="Baverstock P.R."/>
        </authorList>
    </citation>
    <scope>NUCLEOTIDE SEQUENCE [GENOMIC DNA] OF 12-299</scope>
    <source>
        <strain>Various strains</strain>
    </source>
</reference>
<reference key="16">
    <citation type="journal article" date="1997" name="Electrophoresis">
        <title>Escherichia coli proteome analysis using the gene-protein database.</title>
        <authorList>
            <person name="VanBogelen R.A."/>
            <person name="Abshire K.Z."/>
            <person name="Moldover B."/>
            <person name="Olson E.R."/>
            <person name="Neidhardt F.C."/>
        </authorList>
    </citation>
    <scope>IDENTIFICATION BY 2D-GEL</scope>
</reference>
<reference evidence="16" key="17">
    <citation type="journal article" date="1992" name="J. Mol. Biol.">
        <title>Crystal structure of Escherichia coli malate dehydrogenase. A complex of the apoenzyme and citrate at 1.87-A resolution.</title>
        <authorList>
            <person name="Hall M.D."/>
            <person name="Levitt D.G."/>
            <person name="Banaszak L.J."/>
        </authorList>
    </citation>
    <scope>X-RAY CRYSTALLOGRAPHY (1.87 ANGSTROMS) IN COMPLEX WITH SUBSTRATE ANALOG</scope>
    <scope>SUBUNIT</scope>
</reference>
<reference evidence="13" key="18">
    <citation type="journal article" date="1993" name="J. Mol. Biol.">
        <title>Crystal structure of a ternary complex of Escherichia coli malate dehydrogenase citrate and NAD at 1.9 A resolution.</title>
        <authorList>
            <person name="Hall M.D."/>
            <person name="Banaszak L.J."/>
        </authorList>
    </citation>
    <scope>X-RAY CRYSTALLOGRAPHY (1.9 ANGSTROMS) IN COMPLEX WITH NAD AND SUBSTRATE ANALOG</scope>
    <scope>SUBUNIT</scope>
</reference>
<reference evidence="14 15" key="19">
    <citation type="journal article" date="2001" name="J. Biol. Chem.">
        <title>Structural analyses of a malate dehydrogenase with a variable active site.</title>
        <authorList>
            <person name="Bell J.K."/>
            <person name="Yennawar H.P."/>
            <person name="Wright S.K."/>
            <person name="Thompson J.R."/>
            <person name="Viola R.E."/>
            <person name="Banaszak L.J."/>
        </authorList>
    </citation>
    <scope>X-RAY CRYSTALLOGRAPHY (2.1 ANGSTROMS) IN COMPLEX WITH NAD AND SUBSTRATE ANALOG</scope>
    <scope>SUBUNIT</scope>
    <scope>MUTAGENESIS OF ARG-153</scope>
    <scope>ACTIVE SITE</scope>
</reference>
<gene>
    <name evidence="1 7" type="primary">mdh</name>
    <name type="ordered locus">b3236</name>
    <name type="ordered locus">JW3205</name>
</gene>
<accession>P61889</accession>
<accession>O30401</accession>
<accession>O30402</accession>
<accession>O30403</accession>
<accession>P06994</accession>
<accession>Q2M8X7</accession>
<accession>Q59343</accession>
<accession>Q59344</accession>
<accession>Q59345</accession>
<accession>Q59346</accession>
<accession>Q59347</accession>
<accession>Q59348</accession>
<accession>Q60133</accession>
<accession>Q60150</accession>
<accession>Q933J3</accession>
<accession>Q93R02</accession>
<accession>Q9FDQ3</accession>
<accession>Q9FDQ4</accession>
<accession>Q9FDQ5</accession>
<proteinExistence type="evidence at protein level"/>
<name>MDH_ECOLI</name>
<protein>
    <recommendedName>
        <fullName evidence="1 8">Malate dehydrogenase</fullName>
        <ecNumber evidence="1 4 5">1.1.1.37</ecNumber>
    </recommendedName>
</protein>
<feature type="chain" id="PRO_0000113301" description="Malate dehydrogenase">
    <location>
        <begin position="1"/>
        <end position="312"/>
    </location>
</feature>
<feature type="active site" description="Proton acceptor" evidence="1 10">
    <location>
        <position position="177"/>
    </location>
</feature>
<feature type="binding site" evidence="1 2 6">
    <location>
        <begin position="7"/>
        <end position="13"/>
    </location>
    <ligand>
        <name>NAD(+)</name>
        <dbReference type="ChEBI" id="CHEBI:57540"/>
    </ligand>
</feature>
<feature type="binding site" evidence="1 2 6">
    <location>
        <position position="34"/>
    </location>
    <ligand>
        <name>NAD(+)</name>
        <dbReference type="ChEBI" id="CHEBI:57540"/>
    </ligand>
</feature>
<feature type="binding site" evidence="1 11 12">
    <location>
        <position position="81"/>
    </location>
    <ligand>
        <name>substrate</name>
    </ligand>
</feature>
<feature type="binding site" evidence="1 11 12">
    <location>
        <position position="87"/>
    </location>
    <ligand>
        <name>substrate</name>
    </ligand>
</feature>
<feature type="binding site" evidence="1 2 6">
    <location>
        <position position="94"/>
    </location>
    <ligand>
        <name>NAD(+)</name>
        <dbReference type="ChEBI" id="CHEBI:57540"/>
    </ligand>
</feature>
<feature type="binding site" evidence="1 2 6">
    <location>
        <begin position="117"/>
        <end position="119"/>
    </location>
    <ligand>
        <name>NAD(+)</name>
        <dbReference type="ChEBI" id="CHEBI:57540"/>
    </ligand>
</feature>
<feature type="binding site" evidence="1 11 12">
    <location>
        <position position="119"/>
    </location>
    <ligand>
        <name>substrate</name>
    </ligand>
</feature>
<feature type="binding site" evidence="1 11 12">
    <location>
        <position position="153"/>
    </location>
    <ligand>
        <name>substrate</name>
    </ligand>
</feature>
<feature type="binding site" evidence="1 2 6">
    <location>
        <position position="227"/>
    </location>
    <ligand>
        <name>NAD(+)</name>
        <dbReference type="ChEBI" id="CHEBI:57540"/>
    </ligand>
</feature>
<feature type="sequence variant" description="In strain: EC47, EC49, EC50 and RT272.">
    <original>D</original>
    <variation>N</variation>
    <location>
        <position position="71"/>
    </location>
</feature>
<feature type="sequence variant" description="In strain: ECOR 27 and RT082.">
    <original>A</original>
    <variation>S</variation>
    <location>
        <position position="106"/>
    </location>
</feature>
<feature type="sequence variant" description="In strain: MB001D.">
    <original>A</original>
    <variation>P</variation>
    <location>
        <position position="209"/>
    </location>
</feature>
<feature type="sequence variant" description="In strain: A8190, E2666-74, E830587, E851819, E3406, EC10, EC14, EC32, EC35, EC38, EC40, EC44, EC46, EC47, EC49, EC50, EC52, EC58, E64 and EC70.">
    <original>A</original>
    <variation>R</variation>
    <location>
        <position position="218"/>
    </location>
</feature>
<feature type="sequence variant" description="In strain: ECO R37.">
    <original>A</original>
    <variation>T</variation>
    <location>
        <position position="232"/>
    </location>
</feature>
<feature type="sequence variant" description="In strain: RT083.">
    <original>V</original>
    <variation>I</variation>
    <location>
        <position position="249"/>
    </location>
</feature>
<feature type="sequence variant" description="In strain: EC35, EC38, EC40, EC44, EC46, EC47 and RT272.">
    <original>Q</original>
    <variation>K</variation>
    <location>
        <position position="289"/>
    </location>
</feature>
<feature type="sequence variant" description="In strain: E2666-74, ECOR 27, ECOR 45, RL012A, RT104 and RT174.">
    <original>N</original>
    <variation>S</variation>
    <location>
        <position position="290"/>
    </location>
</feature>
<feature type="sequence variant" description="In strain: EC35.">
    <original>A</original>
    <variation>S</variation>
    <location>
        <position position="291"/>
    </location>
</feature>
<feature type="sequence variant" description="In strain: ECOR 45.">
    <original>G</original>
    <variation>A</variation>
    <location>
        <position position="294"/>
    </location>
</feature>
<feature type="sequence variant" description="In strain: E830587.">
    <original>D</original>
    <variation>N</variation>
    <location>
        <position position="297"/>
    </location>
</feature>
<feature type="mutagenesis site" description="Loss of interaction with substrate." evidence="2">
    <original>R</original>
    <variation>C</variation>
    <location>
        <position position="153"/>
    </location>
</feature>
<feature type="sequence conflict" description="In Ref. 5." evidence="9" ref="5">
    <original>P</original>
    <variation>S</variation>
    <location>
        <position position="37"/>
    </location>
</feature>
<feature type="sequence conflict" description="In Ref. 2." evidence="9" ref="2">
    <original>A</original>
    <variation>R</variation>
    <location>
        <position position="70"/>
    </location>
</feature>
<feature type="sequence conflict" description="In Ref. 1 and 2." evidence="9" ref="1 2">
    <original>A</original>
    <variation>R</variation>
    <location>
        <position position="80"/>
    </location>
</feature>
<feature type="sequence conflict" description="In Ref. 2." evidence="9" ref="2">
    <original>I</original>
    <variation>N</variation>
    <location>
        <position position="116"/>
    </location>
</feature>
<feature type="sequence conflict" description="In Ref. 1." evidence="9" ref="1">
    <original>F</original>
    <variation>L</variation>
    <location>
        <position position="144"/>
    </location>
</feature>
<feature type="sequence conflict" description="In Ref. 2." evidence="9" ref="2">
    <original>LGEEFVNK</original>
    <variation>WAKSSLISN</variation>
    <location>
        <begin position="305"/>
        <end position="312"/>
    </location>
</feature>
<feature type="sequence conflict" description="In Ref. 1." evidence="9" ref="1">
    <original>E</original>
    <variation>Q</variation>
    <location>
        <position position="307"/>
    </location>
</feature>
<feature type="strand" evidence="18">
    <location>
        <begin position="2"/>
        <end position="6"/>
    </location>
</feature>
<feature type="turn" evidence="18">
    <location>
        <begin position="7"/>
        <end position="9"/>
    </location>
</feature>
<feature type="helix" evidence="18">
    <location>
        <begin position="11"/>
        <end position="23"/>
    </location>
</feature>
<feature type="strand" evidence="18">
    <location>
        <begin position="28"/>
        <end position="33"/>
    </location>
</feature>
<feature type="helix" evidence="18">
    <location>
        <begin position="39"/>
        <end position="47"/>
    </location>
</feature>
<feature type="strand" evidence="18">
    <location>
        <begin position="51"/>
        <end position="58"/>
    </location>
</feature>
<feature type="helix" evidence="18">
    <location>
        <begin position="64"/>
        <end position="67"/>
    </location>
</feature>
<feature type="strand" evidence="18">
    <location>
        <begin position="71"/>
        <end position="75"/>
    </location>
</feature>
<feature type="helix" evidence="18">
    <location>
        <begin position="87"/>
        <end position="108"/>
    </location>
</feature>
<feature type="strand" evidence="18">
    <location>
        <begin position="112"/>
        <end position="116"/>
    </location>
</feature>
<feature type="strand" evidence="17">
    <location>
        <begin position="118"/>
        <end position="120"/>
    </location>
</feature>
<feature type="helix" evidence="18">
    <location>
        <begin position="121"/>
        <end position="134"/>
    </location>
</feature>
<feature type="strand" evidence="18">
    <location>
        <begin position="142"/>
        <end position="145"/>
    </location>
</feature>
<feature type="helix" evidence="18">
    <location>
        <begin position="148"/>
        <end position="162"/>
    </location>
</feature>
<feature type="helix" evidence="18">
    <location>
        <begin position="166"/>
        <end position="168"/>
    </location>
</feature>
<feature type="strand" evidence="18">
    <location>
        <begin position="173"/>
        <end position="175"/>
    </location>
</feature>
<feature type="helix" evidence="18">
    <location>
        <begin position="179"/>
        <end position="181"/>
    </location>
</feature>
<feature type="strand" evidence="18">
    <location>
        <begin position="182"/>
        <end position="184"/>
    </location>
</feature>
<feature type="helix" evidence="18">
    <location>
        <begin position="186"/>
        <end position="188"/>
    </location>
</feature>
<feature type="helix" evidence="18">
    <location>
        <begin position="196"/>
        <end position="207"/>
    </location>
</feature>
<feature type="helix" evidence="18">
    <location>
        <begin position="209"/>
        <end position="216"/>
    </location>
</feature>
<feature type="turn" evidence="18">
    <location>
        <begin position="217"/>
        <end position="219"/>
    </location>
</feature>
<feature type="helix" evidence="18">
    <location>
        <begin position="225"/>
        <end position="242"/>
    </location>
</feature>
<feature type="strand" evidence="18">
    <location>
        <begin position="249"/>
        <end position="255"/>
    </location>
</feature>
<feature type="strand" evidence="18">
    <location>
        <begin position="262"/>
        <end position="271"/>
    </location>
</feature>
<feature type="strand" evidence="18">
    <location>
        <begin position="274"/>
        <end position="278"/>
    </location>
</feature>
<feature type="helix" evidence="18">
    <location>
        <begin position="286"/>
        <end position="310"/>
    </location>
</feature>
<dbReference type="EC" id="1.1.1.37" evidence="1 4 5"/>
<dbReference type="EMBL" id="Y00129">
    <property type="protein sequence ID" value="CAA68326.1"/>
    <property type="molecule type" value="Genomic_DNA"/>
</dbReference>
<dbReference type="EMBL" id="M24777">
    <property type="protein sequence ID" value="AAA16107.1"/>
    <property type="molecule type" value="Unassigned_DNA"/>
</dbReference>
<dbReference type="EMBL" id="U18997">
    <property type="protein sequence ID" value="AAA58038.1"/>
    <property type="molecule type" value="Genomic_DNA"/>
</dbReference>
<dbReference type="EMBL" id="U00096">
    <property type="protein sequence ID" value="AAC76268.1"/>
    <property type="molecule type" value="Genomic_DNA"/>
</dbReference>
<dbReference type="EMBL" id="AP009048">
    <property type="protein sequence ID" value="BAE77279.1"/>
    <property type="molecule type" value="Genomic_DNA"/>
</dbReference>
<dbReference type="EMBL" id="M10417">
    <property type="protein sequence ID" value="AAA24147.1"/>
    <property type="molecule type" value="Genomic_DNA"/>
</dbReference>
<dbReference type="EMBL" id="U04742">
    <property type="protein sequence ID" value="AAC43730.1"/>
    <property type="molecule type" value="Genomic_DNA"/>
</dbReference>
<dbReference type="EMBL" id="U04743">
    <property type="protein sequence ID" value="AAC43731.1"/>
    <property type="molecule type" value="Genomic_DNA"/>
</dbReference>
<dbReference type="EMBL" id="U04744">
    <property type="protein sequence ID" value="AAC43732.1"/>
    <property type="molecule type" value="Genomic_DNA"/>
</dbReference>
<dbReference type="EMBL" id="U04745">
    <property type="protein sequence ID" value="AAC43733.1"/>
    <property type="molecule type" value="Genomic_DNA"/>
</dbReference>
<dbReference type="EMBL" id="U04746">
    <property type="protein sequence ID" value="AAC43734.1"/>
    <property type="molecule type" value="Genomic_DNA"/>
</dbReference>
<dbReference type="EMBL" id="U04747">
    <property type="protein sequence ID" value="AAC43735.1"/>
    <property type="molecule type" value="Genomic_DNA"/>
</dbReference>
<dbReference type="EMBL" id="U04748">
    <property type="protein sequence ID" value="AAC43736.1"/>
    <property type="molecule type" value="Genomic_DNA"/>
</dbReference>
<dbReference type="EMBL" id="U04749">
    <property type="protein sequence ID" value="AAC43737.1"/>
    <property type="molecule type" value="Genomic_DNA"/>
</dbReference>
<dbReference type="EMBL" id="U04750">
    <property type="protein sequence ID" value="AAC43738.1"/>
    <property type="molecule type" value="Genomic_DNA"/>
</dbReference>
<dbReference type="EMBL" id="U04751">
    <property type="protein sequence ID" value="AAC43739.1"/>
    <property type="molecule type" value="Genomic_DNA"/>
</dbReference>
<dbReference type="EMBL" id="U04752">
    <property type="protein sequence ID" value="AAC43740.1"/>
    <property type="molecule type" value="Genomic_DNA"/>
</dbReference>
<dbReference type="EMBL" id="U04753">
    <property type="protein sequence ID" value="AAC43741.1"/>
    <property type="molecule type" value="Genomic_DNA"/>
</dbReference>
<dbReference type="EMBL" id="U04754">
    <property type="protein sequence ID" value="AAC43742.1"/>
    <property type="molecule type" value="Genomic_DNA"/>
</dbReference>
<dbReference type="EMBL" id="U04755">
    <property type="protein sequence ID" value="AAC43743.1"/>
    <property type="molecule type" value="Genomic_DNA"/>
</dbReference>
<dbReference type="EMBL" id="U04756">
    <property type="protein sequence ID" value="AAC43744.1"/>
    <property type="molecule type" value="Genomic_DNA"/>
</dbReference>
<dbReference type="EMBL" id="U04757">
    <property type="protein sequence ID" value="AAC43745.1"/>
    <property type="molecule type" value="Genomic_DNA"/>
</dbReference>
<dbReference type="EMBL" id="U04758">
    <property type="protein sequence ID" value="AAC43746.1"/>
    <property type="molecule type" value="Genomic_DNA"/>
</dbReference>
<dbReference type="EMBL" id="U04759">
    <property type="protein sequence ID" value="AAC43747.1"/>
    <property type="molecule type" value="Genomic_DNA"/>
</dbReference>
<dbReference type="EMBL" id="U04760">
    <property type="protein sequence ID" value="AAC43748.1"/>
    <property type="molecule type" value="Genomic_DNA"/>
</dbReference>
<dbReference type="EMBL" id="U04770">
    <property type="protein sequence ID" value="AAC43758.1"/>
    <property type="molecule type" value="Genomic_DNA"/>
</dbReference>
<dbReference type="EMBL" id="AF004170">
    <property type="protein sequence ID" value="AAB87003.1"/>
    <property type="molecule type" value="Genomic_DNA"/>
</dbReference>
<dbReference type="EMBL" id="AF004171">
    <property type="protein sequence ID" value="AAB87004.1"/>
    <property type="molecule type" value="Genomic_DNA"/>
</dbReference>
<dbReference type="EMBL" id="AF004172">
    <property type="protein sequence ID" value="AAB87005.1"/>
    <property type="molecule type" value="Genomic_DNA"/>
</dbReference>
<dbReference type="EMBL" id="AF004173">
    <property type="protein sequence ID" value="AAB87006.1"/>
    <property type="molecule type" value="Genomic_DNA"/>
</dbReference>
<dbReference type="EMBL" id="AF004174">
    <property type="protein sequence ID" value="AAB87007.1"/>
    <property type="molecule type" value="Genomic_DNA"/>
</dbReference>
<dbReference type="EMBL" id="AF004175">
    <property type="protein sequence ID" value="AAB87008.1"/>
    <property type="molecule type" value="Genomic_DNA"/>
</dbReference>
<dbReference type="EMBL" id="AF004176">
    <property type="protein sequence ID" value="AAB87009.1"/>
    <property type="molecule type" value="Genomic_DNA"/>
</dbReference>
<dbReference type="EMBL" id="AF004177">
    <property type="protein sequence ID" value="AAB87010.1"/>
    <property type="molecule type" value="Genomic_DNA"/>
</dbReference>
<dbReference type="EMBL" id="AF004179">
    <property type="protein sequence ID" value="AAB87012.1"/>
    <property type="molecule type" value="Genomic_DNA"/>
</dbReference>
<dbReference type="EMBL" id="AF004180">
    <property type="protein sequence ID" value="AAB87013.1"/>
    <property type="molecule type" value="Genomic_DNA"/>
</dbReference>
<dbReference type="EMBL" id="AF004182">
    <property type="protein sequence ID" value="AAB87015.1"/>
    <property type="molecule type" value="Genomic_DNA"/>
</dbReference>
<dbReference type="EMBL" id="AF004183">
    <property type="protein sequence ID" value="AAB87016.1"/>
    <property type="molecule type" value="Genomic_DNA"/>
</dbReference>
<dbReference type="EMBL" id="AF004184">
    <property type="protein sequence ID" value="AAB87017.1"/>
    <property type="molecule type" value="Genomic_DNA"/>
</dbReference>
<dbReference type="EMBL" id="AF004186">
    <property type="protein sequence ID" value="AAB87019.1"/>
    <property type="molecule type" value="Genomic_DNA"/>
</dbReference>
<dbReference type="EMBL" id="AF004187">
    <property type="protein sequence ID" value="AAB87020.1"/>
    <property type="molecule type" value="Genomic_DNA"/>
</dbReference>
<dbReference type="EMBL" id="AF004188">
    <property type="protein sequence ID" value="AAB87021.1"/>
    <property type="molecule type" value="Genomic_DNA"/>
</dbReference>
<dbReference type="EMBL" id="AF004190">
    <property type="protein sequence ID" value="AAB87023.1"/>
    <property type="molecule type" value="Genomic_DNA"/>
</dbReference>
<dbReference type="EMBL" id="AF004191">
    <property type="protein sequence ID" value="AAB87024.1"/>
    <property type="molecule type" value="Genomic_DNA"/>
</dbReference>
<dbReference type="EMBL" id="AF004195">
    <property type="protein sequence ID" value="AAB87028.1"/>
    <property type="molecule type" value="Genomic_DNA"/>
</dbReference>
<dbReference type="EMBL" id="AF004196">
    <property type="protein sequence ID" value="AAB87029.1"/>
    <property type="molecule type" value="Genomic_DNA"/>
</dbReference>
<dbReference type="EMBL" id="AF004199">
    <property type="protein sequence ID" value="AAB87032.1"/>
    <property type="molecule type" value="Genomic_DNA"/>
</dbReference>
<dbReference type="EMBL" id="AF004200">
    <property type="protein sequence ID" value="AAB87033.1"/>
    <property type="molecule type" value="Genomic_DNA"/>
</dbReference>
<dbReference type="EMBL" id="AF004201">
    <property type="protein sequence ID" value="AAB87034.1"/>
    <property type="molecule type" value="Genomic_DNA"/>
</dbReference>
<dbReference type="EMBL" id="AF004202">
    <property type="protein sequence ID" value="AAB87035.1"/>
    <property type="molecule type" value="Genomic_DNA"/>
</dbReference>
<dbReference type="EMBL" id="AF004203">
    <property type="protein sequence ID" value="AAB87036.1"/>
    <property type="molecule type" value="Genomic_DNA"/>
</dbReference>
<dbReference type="EMBL" id="AF004204">
    <property type="protein sequence ID" value="AAB87037.1"/>
    <property type="molecule type" value="Genomic_DNA"/>
</dbReference>
<dbReference type="EMBL" id="AF004205">
    <property type="protein sequence ID" value="AAB87038.1"/>
    <property type="molecule type" value="Genomic_DNA"/>
</dbReference>
<dbReference type="EMBL" id="AF004206">
    <property type="protein sequence ID" value="AAB87039.1"/>
    <property type="molecule type" value="Genomic_DNA"/>
</dbReference>
<dbReference type="EMBL" id="AF004207">
    <property type="protein sequence ID" value="AAB87040.1"/>
    <property type="molecule type" value="Genomic_DNA"/>
</dbReference>
<dbReference type="EMBL" id="AF004208">
    <property type="protein sequence ID" value="AAB87041.1"/>
    <property type="molecule type" value="Genomic_DNA"/>
</dbReference>
<dbReference type="EMBL" id="AF004209">
    <property type="protein sequence ID" value="AAB87042.1"/>
    <property type="molecule type" value="Genomic_DNA"/>
</dbReference>
<dbReference type="EMBL" id="AF091758">
    <property type="protein sequence ID" value="AAF97988.1"/>
    <property type="molecule type" value="Genomic_DNA"/>
</dbReference>
<dbReference type="EMBL" id="AF091759">
    <property type="protein sequence ID" value="AAF97989.1"/>
    <property type="molecule type" value="Genomic_DNA"/>
</dbReference>
<dbReference type="EMBL" id="AF091760">
    <property type="protein sequence ID" value="AAF97990.1"/>
    <property type="molecule type" value="Genomic_DNA"/>
</dbReference>
<dbReference type="EMBL" id="AF091761">
    <property type="protein sequence ID" value="AAF97991.1"/>
    <property type="molecule type" value="Genomic_DNA"/>
</dbReference>
<dbReference type="EMBL" id="AF091762">
    <property type="protein sequence ID" value="AAF97992.1"/>
    <property type="molecule type" value="Genomic_DNA"/>
</dbReference>
<dbReference type="EMBL" id="AF091763">
    <property type="protein sequence ID" value="AAF97993.1"/>
    <property type="molecule type" value="Genomic_DNA"/>
</dbReference>
<dbReference type="EMBL" id="AF091764">
    <property type="protein sequence ID" value="AAF97994.1"/>
    <property type="molecule type" value="Genomic_DNA"/>
</dbReference>
<dbReference type="EMBL" id="AF091765">
    <property type="protein sequence ID" value="AAF97995.1"/>
    <property type="molecule type" value="Genomic_DNA"/>
</dbReference>
<dbReference type="EMBL" id="AF091766">
    <property type="protein sequence ID" value="AAF97996.1"/>
    <property type="molecule type" value="Genomic_DNA"/>
</dbReference>
<dbReference type="EMBL" id="AF091767">
    <property type="protein sequence ID" value="AAF97997.1"/>
    <property type="molecule type" value="Genomic_DNA"/>
</dbReference>
<dbReference type="EMBL" id="AF091768">
    <property type="protein sequence ID" value="AAF97998.1"/>
    <property type="molecule type" value="Genomic_DNA"/>
</dbReference>
<dbReference type="EMBL" id="AF091769">
    <property type="protein sequence ID" value="AAF97999.1"/>
    <property type="molecule type" value="Genomic_DNA"/>
</dbReference>
<dbReference type="EMBL" id="AF091770">
    <property type="protein sequence ID" value="AAF98000.1"/>
    <property type="molecule type" value="Genomic_DNA"/>
</dbReference>
<dbReference type="EMBL" id="AF091771">
    <property type="protein sequence ID" value="AAF98001.1"/>
    <property type="molecule type" value="Genomic_DNA"/>
</dbReference>
<dbReference type="EMBL" id="AF091772">
    <property type="protein sequence ID" value="AAF98002.1"/>
    <property type="molecule type" value="Genomic_DNA"/>
</dbReference>
<dbReference type="EMBL" id="AF091773">
    <property type="protein sequence ID" value="AAF98003.1"/>
    <property type="molecule type" value="Genomic_DNA"/>
</dbReference>
<dbReference type="EMBL" id="AF091774">
    <property type="protein sequence ID" value="AAF98004.1"/>
    <property type="molecule type" value="Genomic_DNA"/>
</dbReference>
<dbReference type="EMBL" id="AF091775">
    <property type="protein sequence ID" value="AAF98005.1"/>
    <property type="molecule type" value="Genomic_DNA"/>
</dbReference>
<dbReference type="EMBL" id="AF091776">
    <property type="protein sequence ID" value="AAF98006.1"/>
    <property type="molecule type" value="Genomic_DNA"/>
</dbReference>
<dbReference type="EMBL" id="AF091777">
    <property type="protein sequence ID" value="AAF98007.1"/>
    <property type="molecule type" value="Genomic_DNA"/>
</dbReference>
<dbReference type="EMBL" id="AF091778">
    <property type="protein sequence ID" value="AAF98008.1"/>
    <property type="molecule type" value="Genomic_DNA"/>
</dbReference>
<dbReference type="PIR" id="F65115">
    <property type="entry name" value="DEECM"/>
</dbReference>
<dbReference type="RefSeq" id="NP_417703.1">
    <property type="nucleotide sequence ID" value="NC_000913.3"/>
</dbReference>
<dbReference type="RefSeq" id="WP_001295272.1">
    <property type="nucleotide sequence ID" value="NZ_STEB01000012.1"/>
</dbReference>
<dbReference type="PDB" id="1EMD">
    <property type="method" value="X-ray"/>
    <property type="resolution" value="1.90 A"/>
    <property type="chains" value="A=1-312"/>
</dbReference>
<dbReference type="PDB" id="1IB6">
    <property type="method" value="X-ray"/>
    <property type="resolution" value="2.10 A"/>
    <property type="chains" value="A/B/C/D=1-312"/>
</dbReference>
<dbReference type="PDB" id="1IE3">
    <property type="method" value="X-ray"/>
    <property type="resolution" value="2.50 A"/>
    <property type="chains" value="A/B/C/D=1-312"/>
</dbReference>
<dbReference type="PDB" id="2CMD">
    <property type="method" value="X-ray"/>
    <property type="resolution" value="1.87 A"/>
    <property type="chains" value="A=1-312"/>
</dbReference>
<dbReference type="PDB" id="2PWZ">
    <property type="method" value="X-ray"/>
    <property type="resolution" value="2.20 A"/>
    <property type="chains" value="A/C/E/G=1-312"/>
</dbReference>
<dbReference type="PDB" id="3HHP">
    <property type="method" value="X-ray"/>
    <property type="resolution" value="1.45 A"/>
    <property type="chains" value="A/B/C/D=1-312"/>
</dbReference>
<dbReference type="PDB" id="5KKA">
    <property type="method" value="X-ray"/>
    <property type="resolution" value="1.75 A"/>
    <property type="chains" value="A/B=1-312"/>
</dbReference>
<dbReference type="PDB" id="5Z3W">
    <property type="method" value="X-ray"/>
    <property type="resolution" value="2.29 A"/>
    <property type="chains" value="A/B/C/D=1-311"/>
</dbReference>
<dbReference type="PDB" id="6KA0">
    <property type="method" value="X-ray"/>
    <property type="resolution" value="2.22 A"/>
    <property type="chains" value="A/B/C/D=1-312"/>
</dbReference>
<dbReference type="PDB" id="6KA1">
    <property type="method" value="X-ray"/>
    <property type="resolution" value="1.54 A"/>
    <property type="chains" value="A/B/C/D=1-311"/>
</dbReference>
<dbReference type="PDB" id="7CGC">
    <property type="method" value="X-ray"/>
    <property type="resolution" value="2.55 A"/>
    <property type="chains" value="A/B/C/D=1-312"/>
</dbReference>
<dbReference type="PDB" id="7CGD">
    <property type="method" value="X-ray"/>
    <property type="resolution" value="2.06 A"/>
    <property type="chains" value="A/B/C/D=1-312"/>
</dbReference>
<dbReference type="PDB" id="7XQN">
    <property type="method" value="X-ray"/>
    <property type="resolution" value="1.98 A"/>
    <property type="chains" value="A/B=1-312"/>
</dbReference>
<dbReference type="PDBsum" id="1EMD"/>
<dbReference type="PDBsum" id="1IB6"/>
<dbReference type="PDBsum" id="1IE3"/>
<dbReference type="PDBsum" id="2CMD"/>
<dbReference type="PDBsum" id="2PWZ"/>
<dbReference type="PDBsum" id="3HHP"/>
<dbReference type="PDBsum" id="5KKA"/>
<dbReference type="PDBsum" id="5Z3W"/>
<dbReference type="PDBsum" id="6KA0"/>
<dbReference type="PDBsum" id="6KA1"/>
<dbReference type="PDBsum" id="7CGC"/>
<dbReference type="PDBsum" id="7CGD"/>
<dbReference type="PDBsum" id="7XQN"/>
<dbReference type="SMR" id="P61889"/>
<dbReference type="BioGRID" id="4260779">
    <property type="interactions" value="31"/>
</dbReference>
<dbReference type="BioGRID" id="852165">
    <property type="interactions" value="2"/>
</dbReference>
<dbReference type="DIP" id="DIP-35924N"/>
<dbReference type="FunCoup" id="P61889">
    <property type="interactions" value="824"/>
</dbReference>
<dbReference type="IntAct" id="P61889">
    <property type="interactions" value="10"/>
</dbReference>
<dbReference type="STRING" id="511145.b3236"/>
<dbReference type="jPOST" id="P61889"/>
<dbReference type="PaxDb" id="511145-b3236"/>
<dbReference type="EnsemblBacteria" id="AAC76268">
    <property type="protein sequence ID" value="AAC76268"/>
    <property type="gene ID" value="b3236"/>
</dbReference>
<dbReference type="GeneID" id="93778749"/>
<dbReference type="GeneID" id="947854"/>
<dbReference type="KEGG" id="ecj:JW3205"/>
<dbReference type="KEGG" id="eco:b3236"/>
<dbReference type="KEGG" id="ecoc:C3026_17605"/>
<dbReference type="PATRIC" id="fig|1411691.4.peg.3492"/>
<dbReference type="EchoBASE" id="EB0571"/>
<dbReference type="eggNOG" id="COG0039">
    <property type="taxonomic scope" value="Bacteria"/>
</dbReference>
<dbReference type="HOGENOM" id="CLU_047181_0_1_6"/>
<dbReference type="InParanoid" id="P61889"/>
<dbReference type="OMA" id="ASCAEYI"/>
<dbReference type="OrthoDB" id="9802969at2"/>
<dbReference type="PhylomeDB" id="P61889"/>
<dbReference type="BioCyc" id="EcoCyc:MALATE-DEHASE-MONOMER"/>
<dbReference type="BioCyc" id="MetaCyc:MALATE-DEHASE-MONOMER"/>
<dbReference type="BRENDA" id="1.1.1.37">
    <property type="organism ID" value="2026"/>
</dbReference>
<dbReference type="SABIO-RK" id="P61889"/>
<dbReference type="EvolutionaryTrace" id="P61889"/>
<dbReference type="PRO" id="PR:P61889"/>
<dbReference type="Proteomes" id="UP000000625">
    <property type="component" value="Chromosome"/>
</dbReference>
<dbReference type="GO" id="GO:0005737">
    <property type="term" value="C:cytoplasm"/>
    <property type="evidence" value="ECO:0000314"/>
    <property type="project" value="EcoliWiki"/>
</dbReference>
<dbReference type="GO" id="GO:0005829">
    <property type="term" value="C:cytosol"/>
    <property type="evidence" value="ECO:0000314"/>
    <property type="project" value="EcoCyc"/>
</dbReference>
<dbReference type="GO" id="GO:0019898">
    <property type="term" value="C:extrinsic component of membrane"/>
    <property type="evidence" value="ECO:0000314"/>
    <property type="project" value="EcoliWiki"/>
</dbReference>
<dbReference type="GO" id="GO:0016020">
    <property type="term" value="C:membrane"/>
    <property type="evidence" value="ECO:0007005"/>
    <property type="project" value="UniProtKB"/>
</dbReference>
<dbReference type="GO" id="GO:0030060">
    <property type="term" value="F:L-malate dehydrogenase (NAD+) activity"/>
    <property type="evidence" value="ECO:0000318"/>
    <property type="project" value="GO_Central"/>
</dbReference>
<dbReference type="GO" id="GO:0016615">
    <property type="term" value="F:malate dehydrogenase activity"/>
    <property type="evidence" value="ECO:0000314"/>
    <property type="project" value="EcoliWiki"/>
</dbReference>
<dbReference type="GO" id="GO:0016491">
    <property type="term" value="F:oxidoreductase activity"/>
    <property type="evidence" value="ECO:0000314"/>
    <property type="project" value="EcoliWiki"/>
</dbReference>
<dbReference type="GO" id="GO:0042803">
    <property type="term" value="F:protein homodimerization activity"/>
    <property type="evidence" value="ECO:0000314"/>
    <property type="project" value="EcoCyc"/>
</dbReference>
<dbReference type="GO" id="GO:0009061">
    <property type="term" value="P:anaerobic respiration"/>
    <property type="evidence" value="ECO:0000314"/>
    <property type="project" value="EcoliWiki"/>
</dbReference>
<dbReference type="GO" id="GO:0006113">
    <property type="term" value="P:fermentation"/>
    <property type="evidence" value="ECO:0000314"/>
    <property type="project" value="EcoliWiki"/>
</dbReference>
<dbReference type="GO" id="GO:0006096">
    <property type="term" value="P:glycolytic process"/>
    <property type="evidence" value="ECO:0000314"/>
    <property type="project" value="EcoliWiki"/>
</dbReference>
<dbReference type="GO" id="GO:0006108">
    <property type="term" value="P:malate metabolic process"/>
    <property type="evidence" value="ECO:0000314"/>
    <property type="project" value="EcoliWiki"/>
</dbReference>
<dbReference type="GO" id="GO:0006099">
    <property type="term" value="P:tricarboxylic acid cycle"/>
    <property type="evidence" value="ECO:0000314"/>
    <property type="project" value="EcoliWiki"/>
</dbReference>
<dbReference type="CDD" id="cd01337">
    <property type="entry name" value="MDH_glyoxysomal_mitochondrial"/>
    <property type="match status" value="1"/>
</dbReference>
<dbReference type="FunFam" id="3.40.50.720:FF:000017">
    <property type="entry name" value="Malate dehydrogenase"/>
    <property type="match status" value="1"/>
</dbReference>
<dbReference type="FunFam" id="3.90.110.10:FF:000001">
    <property type="entry name" value="Malate dehydrogenase"/>
    <property type="match status" value="1"/>
</dbReference>
<dbReference type="Gene3D" id="3.90.110.10">
    <property type="entry name" value="Lactate dehydrogenase/glycoside hydrolase, family 4, C-terminal"/>
    <property type="match status" value="1"/>
</dbReference>
<dbReference type="Gene3D" id="3.40.50.720">
    <property type="entry name" value="NAD(P)-binding Rossmann-like Domain"/>
    <property type="match status" value="1"/>
</dbReference>
<dbReference type="HAMAP" id="MF_01516">
    <property type="entry name" value="Malate_dehydrog_1"/>
    <property type="match status" value="1"/>
</dbReference>
<dbReference type="InterPro" id="IPR001557">
    <property type="entry name" value="L-lactate/malate_DH"/>
</dbReference>
<dbReference type="InterPro" id="IPR022383">
    <property type="entry name" value="Lactate/malate_DH_C"/>
</dbReference>
<dbReference type="InterPro" id="IPR001236">
    <property type="entry name" value="Lactate/malate_DH_N"/>
</dbReference>
<dbReference type="InterPro" id="IPR015955">
    <property type="entry name" value="Lactate_DH/Glyco_Ohase_4_C"/>
</dbReference>
<dbReference type="InterPro" id="IPR001252">
    <property type="entry name" value="Malate_DH_AS"/>
</dbReference>
<dbReference type="InterPro" id="IPR010097">
    <property type="entry name" value="Malate_DH_type1"/>
</dbReference>
<dbReference type="InterPro" id="IPR023958">
    <property type="entry name" value="Malate_DH_type1_bac"/>
</dbReference>
<dbReference type="InterPro" id="IPR036291">
    <property type="entry name" value="NAD(P)-bd_dom_sf"/>
</dbReference>
<dbReference type="NCBIfam" id="TIGR01772">
    <property type="entry name" value="MDH_euk_gproteo"/>
    <property type="match status" value="1"/>
</dbReference>
<dbReference type="PANTHER" id="PTHR11540">
    <property type="entry name" value="MALATE AND LACTATE DEHYDROGENASE"/>
    <property type="match status" value="1"/>
</dbReference>
<dbReference type="PANTHER" id="PTHR11540:SF16">
    <property type="entry name" value="MALATE DEHYDROGENASE, MITOCHONDRIAL"/>
    <property type="match status" value="1"/>
</dbReference>
<dbReference type="Pfam" id="PF02866">
    <property type="entry name" value="Ldh_1_C"/>
    <property type="match status" value="1"/>
</dbReference>
<dbReference type="Pfam" id="PF00056">
    <property type="entry name" value="Ldh_1_N"/>
    <property type="match status" value="1"/>
</dbReference>
<dbReference type="PIRSF" id="PIRSF000102">
    <property type="entry name" value="Lac_mal_DH"/>
    <property type="match status" value="1"/>
</dbReference>
<dbReference type="SUPFAM" id="SSF56327">
    <property type="entry name" value="LDH C-terminal domain-like"/>
    <property type="match status" value="1"/>
</dbReference>
<dbReference type="SUPFAM" id="SSF51735">
    <property type="entry name" value="NAD(P)-binding Rossmann-fold domains"/>
    <property type="match status" value="1"/>
</dbReference>
<dbReference type="PROSITE" id="PS00068">
    <property type="entry name" value="MDH"/>
    <property type="match status" value="1"/>
</dbReference>
<evidence type="ECO:0000255" key="1">
    <source>
        <dbReference type="HAMAP-Rule" id="MF_01516"/>
    </source>
</evidence>
<evidence type="ECO:0000269" key="2">
    <source>
    </source>
</evidence>
<evidence type="ECO:0000269" key="3">
    <source>
    </source>
</evidence>
<evidence type="ECO:0000269" key="4">
    <source>
    </source>
</evidence>
<evidence type="ECO:0000269" key="5">
    <source>
    </source>
</evidence>
<evidence type="ECO:0000269" key="6">
    <source>
    </source>
</evidence>
<evidence type="ECO:0000303" key="7">
    <source>
    </source>
</evidence>
<evidence type="ECO:0000303" key="8">
    <source>
    </source>
</evidence>
<evidence type="ECO:0000305" key="9"/>
<evidence type="ECO:0000305" key="10">
    <source>
    </source>
</evidence>
<evidence type="ECO:0000305" key="11">
    <source>
    </source>
</evidence>
<evidence type="ECO:0000305" key="12">
    <source>
    </source>
</evidence>
<evidence type="ECO:0007744" key="13">
    <source>
        <dbReference type="PDB" id="1EMD"/>
    </source>
</evidence>
<evidence type="ECO:0007744" key="14">
    <source>
        <dbReference type="PDB" id="1IB6"/>
    </source>
</evidence>
<evidence type="ECO:0007744" key="15">
    <source>
        <dbReference type="PDB" id="1IE3"/>
    </source>
</evidence>
<evidence type="ECO:0007744" key="16">
    <source>
        <dbReference type="PDB" id="2CMD"/>
    </source>
</evidence>
<evidence type="ECO:0007829" key="17">
    <source>
        <dbReference type="PDB" id="2CMD"/>
    </source>
</evidence>
<evidence type="ECO:0007829" key="18">
    <source>
        <dbReference type="PDB" id="3HHP"/>
    </source>
</evidence>
<comment type="function">
    <text evidence="1 4 5">Catalyzes the reversible oxidation of malate to oxaloacetate.</text>
</comment>
<comment type="catalytic activity">
    <reaction evidence="1 4 5">
        <text>(S)-malate + NAD(+) = oxaloacetate + NADH + H(+)</text>
        <dbReference type="Rhea" id="RHEA:21432"/>
        <dbReference type="ChEBI" id="CHEBI:15378"/>
        <dbReference type="ChEBI" id="CHEBI:15589"/>
        <dbReference type="ChEBI" id="CHEBI:16452"/>
        <dbReference type="ChEBI" id="CHEBI:57540"/>
        <dbReference type="ChEBI" id="CHEBI:57945"/>
        <dbReference type="EC" id="1.1.1.37"/>
    </reaction>
</comment>
<comment type="subunit">
    <text evidence="1 2 3 5 6">Homodimer.</text>
</comment>
<comment type="similarity">
    <text evidence="1 9">Belongs to the LDH/MDH superfamily. MDH type 1 family.</text>
</comment>
<keyword id="KW-0002">3D-structure</keyword>
<keyword id="KW-0903">Direct protein sequencing</keyword>
<keyword id="KW-0520">NAD</keyword>
<keyword id="KW-0560">Oxidoreductase</keyword>
<keyword id="KW-1185">Reference proteome</keyword>
<keyword id="KW-0816">Tricarboxylic acid cycle</keyword>
<sequence>MKVAVLGAAGGIGQALALLLKTQLPSGSELSLYDIAPVTPGVAVDLSHIPTAVKIKGFSGEDATPALEGADVVLISAGVARKPGMDRSDLFNVNAGIVKNLVQQVAKTCPKACIGIITNPVNTTVAIAAEVLKKAGVYDKNKLFGVTTLDIIRSNTFVAELKGKQPGEVEVPVIGGHSGVTILPLLSQVPGVSFTEQEVADLTKRIQNAGTEVVEAKAGGGSATLSMGQAAARFGLSLVRALQGEQGVVECAYVEGDGQYARFFSQPLLLGKNGVEERKSIGTLSAFEQNALEGMLDTLKKDIALGEEFVNK</sequence>
<organism>
    <name type="scientific">Escherichia coli (strain K12)</name>
    <dbReference type="NCBI Taxonomy" id="83333"/>
    <lineage>
        <taxon>Bacteria</taxon>
        <taxon>Pseudomonadati</taxon>
        <taxon>Pseudomonadota</taxon>
        <taxon>Gammaproteobacteria</taxon>
        <taxon>Enterobacterales</taxon>
        <taxon>Enterobacteriaceae</taxon>
        <taxon>Escherichia</taxon>
    </lineage>
</organism>